<organism>
    <name type="scientific">Agathobacter rectalis (strain ATCC 33656 / DSM 3377 / JCM 17463 / KCTC 5835 / VPI 0990)</name>
    <name type="common">Eubacterium rectale</name>
    <dbReference type="NCBI Taxonomy" id="515619"/>
    <lineage>
        <taxon>Bacteria</taxon>
        <taxon>Bacillati</taxon>
        <taxon>Bacillota</taxon>
        <taxon>Clostridia</taxon>
        <taxon>Lachnospirales</taxon>
        <taxon>Lachnospiraceae</taxon>
        <taxon>Agathobacter</taxon>
    </lineage>
</organism>
<accession>C4ZA73</accession>
<proteinExistence type="inferred from homology"/>
<sequence>MDSRLNPFQDKMEKTLNNLEEEYAGIRAGRANPHILDKLRVDYYGTPSPIQSVANVSVPEPRMIQIQPWEASMVKEIEKAINCSDIGINPTNDGKLIRLVFPELTEERRKDLAKDIKKKGEEAKVAVRNIRRDAIDSIKKTGKEEGISEDEIKGLEDDAQKLTDKFVAKVDAAVDAKCKEILTV</sequence>
<dbReference type="EMBL" id="CP001107">
    <property type="protein sequence ID" value="ACR75514.1"/>
    <property type="molecule type" value="Genomic_DNA"/>
</dbReference>
<dbReference type="RefSeq" id="WP_012742612.1">
    <property type="nucleotide sequence ID" value="NZ_CAXSYD010000002.1"/>
</dbReference>
<dbReference type="SMR" id="C4ZA73"/>
<dbReference type="STRING" id="515619.EUBREC_1770"/>
<dbReference type="PaxDb" id="515619-EUBREC_1770"/>
<dbReference type="GeneID" id="86988568"/>
<dbReference type="KEGG" id="ere:EUBREC_1770"/>
<dbReference type="HOGENOM" id="CLU_073981_2_0_9"/>
<dbReference type="Proteomes" id="UP000001477">
    <property type="component" value="Chromosome"/>
</dbReference>
<dbReference type="GO" id="GO:0005737">
    <property type="term" value="C:cytoplasm"/>
    <property type="evidence" value="ECO:0007669"/>
    <property type="project" value="UniProtKB-SubCell"/>
</dbReference>
<dbReference type="GO" id="GO:0043023">
    <property type="term" value="F:ribosomal large subunit binding"/>
    <property type="evidence" value="ECO:0007669"/>
    <property type="project" value="TreeGrafter"/>
</dbReference>
<dbReference type="GO" id="GO:0006415">
    <property type="term" value="P:translational termination"/>
    <property type="evidence" value="ECO:0007669"/>
    <property type="project" value="UniProtKB-UniRule"/>
</dbReference>
<dbReference type="CDD" id="cd00520">
    <property type="entry name" value="RRF"/>
    <property type="match status" value="1"/>
</dbReference>
<dbReference type="FunFam" id="1.10.132.20:FF:000001">
    <property type="entry name" value="Ribosome-recycling factor"/>
    <property type="match status" value="1"/>
</dbReference>
<dbReference type="FunFam" id="3.30.1360.40:FF:000001">
    <property type="entry name" value="Ribosome-recycling factor"/>
    <property type="match status" value="1"/>
</dbReference>
<dbReference type="Gene3D" id="3.30.1360.40">
    <property type="match status" value="1"/>
</dbReference>
<dbReference type="Gene3D" id="1.10.132.20">
    <property type="entry name" value="Ribosome-recycling factor"/>
    <property type="match status" value="1"/>
</dbReference>
<dbReference type="HAMAP" id="MF_00040">
    <property type="entry name" value="RRF"/>
    <property type="match status" value="1"/>
</dbReference>
<dbReference type="InterPro" id="IPR002661">
    <property type="entry name" value="Ribosome_recyc_fac"/>
</dbReference>
<dbReference type="InterPro" id="IPR023584">
    <property type="entry name" value="Ribosome_recyc_fac_dom"/>
</dbReference>
<dbReference type="InterPro" id="IPR036191">
    <property type="entry name" value="RRF_sf"/>
</dbReference>
<dbReference type="NCBIfam" id="TIGR00496">
    <property type="entry name" value="frr"/>
    <property type="match status" value="1"/>
</dbReference>
<dbReference type="PANTHER" id="PTHR20982:SF3">
    <property type="entry name" value="MITOCHONDRIAL RIBOSOME RECYCLING FACTOR PSEUDO 1"/>
    <property type="match status" value="1"/>
</dbReference>
<dbReference type="PANTHER" id="PTHR20982">
    <property type="entry name" value="RIBOSOME RECYCLING FACTOR"/>
    <property type="match status" value="1"/>
</dbReference>
<dbReference type="Pfam" id="PF01765">
    <property type="entry name" value="RRF"/>
    <property type="match status" value="1"/>
</dbReference>
<dbReference type="SUPFAM" id="SSF55194">
    <property type="entry name" value="Ribosome recycling factor, RRF"/>
    <property type="match status" value="1"/>
</dbReference>
<protein>
    <recommendedName>
        <fullName evidence="1">Ribosome-recycling factor</fullName>
        <shortName evidence="1">RRF</shortName>
    </recommendedName>
    <alternativeName>
        <fullName evidence="1">Ribosome-releasing factor</fullName>
    </alternativeName>
</protein>
<keyword id="KW-0963">Cytoplasm</keyword>
<keyword id="KW-0648">Protein biosynthesis</keyword>
<feature type="chain" id="PRO_1000202098" description="Ribosome-recycling factor">
    <location>
        <begin position="1"/>
        <end position="184"/>
    </location>
</feature>
<gene>
    <name evidence="1" type="primary">frr</name>
    <name type="ordered locus">EUBREC_1770</name>
</gene>
<name>RRF_AGARV</name>
<reference key="1">
    <citation type="journal article" date="2009" name="Proc. Natl. Acad. Sci. U.S.A.">
        <title>Characterizing a model human gut microbiota composed of members of its two dominant bacterial phyla.</title>
        <authorList>
            <person name="Mahowald M.A."/>
            <person name="Rey F.E."/>
            <person name="Seedorf H."/>
            <person name="Turnbaugh P.J."/>
            <person name="Fulton R.S."/>
            <person name="Wollam A."/>
            <person name="Shah N."/>
            <person name="Wang C."/>
            <person name="Magrini V."/>
            <person name="Wilson R.K."/>
            <person name="Cantarel B.L."/>
            <person name="Coutinho P.M."/>
            <person name="Henrissat B."/>
            <person name="Crock L.W."/>
            <person name="Russell A."/>
            <person name="Verberkmoes N.C."/>
            <person name="Hettich R.L."/>
            <person name="Gordon J.I."/>
        </authorList>
    </citation>
    <scope>NUCLEOTIDE SEQUENCE [LARGE SCALE GENOMIC DNA]</scope>
    <source>
        <strain>ATCC 33656 / DSM 3377 / JCM 17463 / KCTC 5835 / LMG 30912 / VPI 0990</strain>
    </source>
</reference>
<evidence type="ECO:0000255" key="1">
    <source>
        <dbReference type="HAMAP-Rule" id="MF_00040"/>
    </source>
</evidence>
<comment type="function">
    <text evidence="1">Responsible for the release of ribosomes from messenger RNA at the termination of protein biosynthesis. May increase the efficiency of translation by recycling ribosomes from one round of translation to another.</text>
</comment>
<comment type="subcellular location">
    <subcellularLocation>
        <location evidence="1">Cytoplasm</location>
    </subcellularLocation>
</comment>
<comment type="similarity">
    <text evidence="1">Belongs to the RRF family.</text>
</comment>